<keyword id="KW-0106">Calcium</keyword>
<keyword id="KW-0130">Cell adhesion</keyword>
<keyword id="KW-0903">Direct protein sequencing</keyword>
<keyword id="KW-1015">Disulfide bond</keyword>
<keyword id="KW-0245">EGF-like domain</keyword>
<keyword id="KW-0325">Glycoprotein</keyword>
<keyword id="KW-0373">Hyaluronic acid</keyword>
<keyword id="KW-0393">Immunoglobulin domain</keyword>
<keyword id="KW-0430">Lectin</keyword>
<keyword id="KW-0654">Proteoglycan</keyword>
<keyword id="KW-1185">Reference proteome</keyword>
<keyword id="KW-0677">Repeat</keyword>
<keyword id="KW-0964">Secreted</keyword>
<keyword id="KW-0732">Signal</keyword>
<keyword id="KW-0768">Sushi</keyword>
<feature type="signal peptide">
    <location>
        <begin position="1"/>
        <end position="22"/>
    </location>
</feature>
<feature type="chain" id="PRO_0000017519" description="Neurocan core protein">
    <location>
        <begin position="23"/>
        <end position="1257"/>
    </location>
</feature>
<feature type="chain" id="PRO_0000017520" description="150 kDa adult core glycoprotein">
    <location>
        <begin position="639"/>
        <end position="1257"/>
    </location>
</feature>
<feature type="domain" description="Ig-like V-type">
    <location>
        <begin position="37"/>
        <end position="157"/>
    </location>
</feature>
<feature type="domain" description="Link 1" evidence="7">
    <location>
        <begin position="159"/>
        <end position="254"/>
    </location>
</feature>
<feature type="domain" description="Link 2" evidence="7">
    <location>
        <begin position="258"/>
        <end position="356"/>
    </location>
</feature>
<feature type="domain" description="EGF-like 1" evidence="5">
    <location>
        <begin position="949"/>
        <end position="985"/>
    </location>
</feature>
<feature type="domain" description="EGF-like 2; calcium-binding" evidence="5">
    <location>
        <begin position="987"/>
        <end position="1023"/>
    </location>
</feature>
<feature type="domain" description="C-type lectin" evidence="4">
    <location>
        <begin position="1025"/>
        <end position="1154"/>
    </location>
</feature>
<feature type="domain" description="Sushi" evidence="6">
    <location>
        <begin position="1154"/>
        <end position="1214"/>
    </location>
</feature>
<feature type="region of interest" description="Disordered" evidence="8">
    <location>
        <begin position="361"/>
        <end position="391"/>
    </location>
</feature>
<feature type="region of interest" description="Disordered" evidence="8">
    <location>
        <begin position="447"/>
        <end position="493"/>
    </location>
</feature>
<feature type="region of interest" description="Disordered" evidence="8">
    <location>
        <begin position="550"/>
        <end position="610"/>
    </location>
</feature>
<feature type="region of interest" description="Disordered" evidence="8">
    <location>
        <begin position="683"/>
        <end position="707"/>
    </location>
</feature>
<feature type="region of interest" description="Disordered" evidence="8">
    <location>
        <begin position="1215"/>
        <end position="1257"/>
    </location>
</feature>
<feature type="compositionally biased region" description="Low complexity" evidence="8">
    <location>
        <begin position="447"/>
        <end position="459"/>
    </location>
</feature>
<feature type="compositionally biased region" description="Polar residues" evidence="8">
    <location>
        <begin position="464"/>
        <end position="473"/>
    </location>
</feature>
<feature type="compositionally biased region" description="Low complexity" evidence="8">
    <location>
        <begin position="569"/>
        <end position="580"/>
    </location>
</feature>
<feature type="compositionally biased region" description="Basic residues" evidence="8">
    <location>
        <begin position="1215"/>
        <end position="1244"/>
    </location>
</feature>
<feature type="glycosylation site" description="N-linked (GlcNAc...) asparagine" evidence="12">
    <location>
        <position position="121"/>
    </location>
</feature>
<feature type="glycosylation site" description="N-linked (GlcNAc...) asparagine" evidence="3">
    <location>
        <position position="339"/>
    </location>
</feature>
<feature type="glycosylation site" description="O-linked (Xyl...) (chondroitin sulfate) serine" evidence="2">
    <location>
        <position position="380"/>
    </location>
</feature>
<feature type="glycosylation site" description="O-linked (Xyl...) (chondroitin sulfate) serine" evidence="2">
    <location>
        <position position="410"/>
    </location>
</feature>
<feature type="glycosylation site" description="N-linked (GlcNAc...) asparagine" evidence="3">
    <location>
        <position position="737"/>
    </location>
</feature>
<feature type="glycosylation site" description="O-linked (Xyl...) (chondroitin sulfate) serine" evidence="9">
    <location>
        <position position="944"/>
    </location>
</feature>
<feature type="glycosylation site" description="N-linked (GlcNAc...) asparagine" evidence="3">
    <location>
        <position position="967"/>
    </location>
</feature>
<feature type="glycosylation site" description="N-linked (GlcNAc...) asparagine" evidence="3">
    <location>
        <position position="1164"/>
    </location>
</feature>
<feature type="disulfide bond" evidence="1">
    <location>
        <begin position="58"/>
        <end position="139"/>
    </location>
</feature>
<feature type="disulfide bond" evidence="1">
    <location>
        <begin position="181"/>
        <end position="252"/>
    </location>
</feature>
<feature type="disulfide bond" evidence="1">
    <location>
        <begin position="205"/>
        <end position="226"/>
    </location>
</feature>
<feature type="disulfide bond" evidence="1">
    <location>
        <begin position="279"/>
        <end position="354"/>
    </location>
</feature>
<feature type="disulfide bond" evidence="1">
    <location>
        <begin position="303"/>
        <end position="324"/>
    </location>
</feature>
<feature type="disulfide bond" evidence="1">
    <location>
        <begin position="953"/>
        <end position="964"/>
    </location>
</feature>
<feature type="disulfide bond" evidence="1">
    <location>
        <begin position="958"/>
        <end position="973"/>
    </location>
</feature>
<feature type="disulfide bond" evidence="1">
    <location>
        <begin position="975"/>
        <end position="984"/>
    </location>
</feature>
<feature type="disulfide bond" evidence="1">
    <location>
        <begin position="991"/>
        <end position="1002"/>
    </location>
</feature>
<feature type="disulfide bond" evidence="1">
    <location>
        <begin position="996"/>
        <end position="1011"/>
    </location>
</feature>
<feature type="disulfide bond" evidence="1">
    <location>
        <begin position="1013"/>
        <end position="1022"/>
    </location>
</feature>
<feature type="disulfide bond" evidence="1">
    <location>
        <begin position="1029"/>
        <end position="1040"/>
    </location>
</feature>
<feature type="disulfide bond" evidence="1">
    <location>
        <begin position="1057"/>
        <end position="1149"/>
    </location>
</feature>
<feature type="disulfide bond" evidence="1">
    <location>
        <begin position="1125"/>
        <end position="1141"/>
    </location>
</feature>
<feature type="disulfide bond" evidence="1">
    <location>
        <begin position="1156"/>
        <end position="1199"/>
    </location>
</feature>
<feature type="disulfide bond" evidence="1">
    <location>
        <begin position="1185"/>
        <end position="1212"/>
    </location>
</feature>
<dbReference type="EMBL" id="M97161">
    <property type="protein sequence ID" value="AAC37679.1"/>
    <property type="molecule type" value="mRNA"/>
</dbReference>
<dbReference type="PIR" id="S28764">
    <property type="entry name" value="S28764"/>
</dbReference>
<dbReference type="SMR" id="P55067"/>
<dbReference type="FunCoup" id="P55067">
    <property type="interactions" value="157"/>
</dbReference>
<dbReference type="IntAct" id="P55067">
    <property type="interactions" value="1"/>
</dbReference>
<dbReference type="MINT" id="P55067"/>
<dbReference type="STRING" id="10116.ENSRNOP00000062123"/>
<dbReference type="GlyCosmos" id="P55067">
    <property type="glycosylation" value="6 sites, 2 glycans"/>
</dbReference>
<dbReference type="GlyGen" id="P55067">
    <property type="glycosylation" value="11 sites, 2 N-linked glycans (1 site)"/>
</dbReference>
<dbReference type="iPTMnet" id="P55067"/>
<dbReference type="PhosphoSitePlus" id="P55067"/>
<dbReference type="SwissPalm" id="P55067"/>
<dbReference type="PaxDb" id="10116-ENSRNOP00000027768"/>
<dbReference type="UCSC" id="RGD:619941">
    <property type="organism name" value="rat"/>
</dbReference>
<dbReference type="AGR" id="RGD:619941"/>
<dbReference type="RGD" id="619941">
    <property type="gene designation" value="Ncan"/>
</dbReference>
<dbReference type="eggNOG" id="ENOG502QQ78">
    <property type="taxonomic scope" value="Eukaryota"/>
</dbReference>
<dbReference type="InParanoid" id="P55067"/>
<dbReference type="PhylomeDB" id="P55067"/>
<dbReference type="Reactome" id="R-RNO-1971475">
    <property type="pathway name" value="A tetrasaccharide linker sequence is required for GAG synthesis"/>
</dbReference>
<dbReference type="Reactome" id="R-RNO-2022870">
    <property type="pathway name" value="Chondroitin sulfate biosynthesis"/>
</dbReference>
<dbReference type="Reactome" id="R-RNO-2022923">
    <property type="pathway name" value="Dermatan sulfate biosynthesis"/>
</dbReference>
<dbReference type="Reactome" id="R-RNO-2024101">
    <property type="pathway name" value="CS/DS degradation"/>
</dbReference>
<dbReference type="Reactome" id="R-RNO-3000178">
    <property type="pathway name" value="ECM proteoglycans"/>
</dbReference>
<dbReference type="PRO" id="PR:P55067"/>
<dbReference type="Proteomes" id="UP000002494">
    <property type="component" value="Unplaced"/>
</dbReference>
<dbReference type="GO" id="GO:0005615">
    <property type="term" value="C:extracellular space"/>
    <property type="evidence" value="ECO:0000318"/>
    <property type="project" value="GO_Central"/>
</dbReference>
<dbReference type="GO" id="GO:0098982">
    <property type="term" value="C:GABA-ergic synapse"/>
    <property type="evidence" value="ECO:0000266"/>
    <property type="project" value="RGD"/>
</dbReference>
<dbReference type="GO" id="GO:0098978">
    <property type="term" value="C:glutamatergic synapse"/>
    <property type="evidence" value="ECO:0000266"/>
    <property type="project" value="RGD"/>
</dbReference>
<dbReference type="GO" id="GO:0072534">
    <property type="term" value="C:perineuronal net"/>
    <property type="evidence" value="ECO:0000314"/>
    <property type="project" value="RGD"/>
</dbReference>
<dbReference type="GO" id="GO:0098966">
    <property type="term" value="C:perisynaptic extracellular matrix"/>
    <property type="evidence" value="ECO:0000266"/>
    <property type="project" value="RGD"/>
</dbReference>
<dbReference type="GO" id="GO:0005886">
    <property type="term" value="C:plasma membrane"/>
    <property type="evidence" value="ECO:0000304"/>
    <property type="project" value="Reactome"/>
</dbReference>
<dbReference type="GO" id="GO:0045202">
    <property type="term" value="C:synapse"/>
    <property type="evidence" value="ECO:0000314"/>
    <property type="project" value="SynGO"/>
</dbReference>
<dbReference type="GO" id="GO:0005509">
    <property type="term" value="F:calcium ion binding"/>
    <property type="evidence" value="ECO:0007669"/>
    <property type="project" value="InterPro"/>
</dbReference>
<dbReference type="GO" id="GO:0030246">
    <property type="term" value="F:carbohydrate binding"/>
    <property type="evidence" value="ECO:0007669"/>
    <property type="project" value="UniProtKB-KW"/>
</dbReference>
<dbReference type="GO" id="GO:0005540">
    <property type="term" value="F:hyaluronic acid binding"/>
    <property type="evidence" value="ECO:0007669"/>
    <property type="project" value="UniProtKB-KW"/>
</dbReference>
<dbReference type="GO" id="GO:0007155">
    <property type="term" value="P:cell adhesion"/>
    <property type="evidence" value="ECO:0007669"/>
    <property type="project" value="UniProtKB-KW"/>
</dbReference>
<dbReference type="GO" id="GO:0007417">
    <property type="term" value="P:central nervous system development"/>
    <property type="evidence" value="ECO:0000318"/>
    <property type="project" value="GO_Central"/>
</dbReference>
<dbReference type="GO" id="GO:0050804">
    <property type="term" value="P:modulation of chemical synaptic transmission"/>
    <property type="evidence" value="ECO:0000266"/>
    <property type="project" value="RGD"/>
</dbReference>
<dbReference type="GO" id="GO:0099175">
    <property type="term" value="P:regulation of postsynapse organization"/>
    <property type="evidence" value="ECO:0000266"/>
    <property type="project" value="RGD"/>
</dbReference>
<dbReference type="GO" id="GO:0051823">
    <property type="term" value="P:regulation of synapse structural plasticity"/>
    <property type="evidence" value="ECO:0000266"/>
    <property type="project" value="RGD"/>
</dbReference>
<dbReference type="GO" id="GO:0001501">
    <property type="term" value="P:skeletal system development"/>
    <property type="evidence" value="ECO:0000318"/>
    <property type="project" value="GO_Central"/>
</dbReference>
<dbReference type="CDD" id="cd00033">
    <property type="entry name" value="CCP"/>
    <property type="match status" value="1"/>
</dbReference>
<dbReference type="CDD" id="cd00054">
    <property type="entry name" value="EGF_CA"/>
    <property type="match status" value="2"/>
</dbReference>
<dbReference type="CDD" id="cd03517">
    <property type="entry name" value="Link_domain_CSPGs_modules_1_3"/>
    <property type="match status" value="1"/>
</dbReference>
<dbReference type="CDD" id="cd03520">
    <property type="entry name" value="Link_domain_CSPGs_modules_2_4"/>
    <property type="match status" value="1"/>
</dbReference>
<dbReference type="FunFam" id="3.10.100.10:FF:000011">
    <property type="entry name" value="Aggrecan core protein"/>
    <property type="match status" value="1"/>
</dbReference>
<dbReference type="FunFam" id="3.10.100.10:FF:000002">
    <property type="entry name" value="Hyaluronan proteoglycan link protein 1"/>
    <property type="match status" value="1"/>
</dbReference>
<dbReference type="FunFam" id="2.60.40.10:FF:000571">
    <property type="entry name" value="Neurocan core protein"/>
    <property type="match status" value="1"/>
</dbReference>
<dbReference type="FunFam" id="2.10.25.10:FF:000537">
    <property type="entry name" value="Notch 3"/>
    <property type="match status" value="1"/>
</dbReference>
<dbReference type="FunFam" id="2.10.70.10:FF:000003">
    <property type="entry name" value="Versican core protein"/>
    <property type="match status" value="1"/>
</dbReference>
<dbReference type="FunFam" id="3.10.100.10:FF:000003">
    <property type="entry name" value="Versican core protein"/>
    <property type="match status" value="1"/>
</dbReference>
<dbReference type="FunFam" id="2.10.25.10:FF:000006">
    <property type="entry name" value="Versican core protein-like isoform 1"/>
    <property type="match status" value="1"/>
</dbReference>
<dbReference type="Gene3D" id="2.10.70.10">
    <property type="entry name" value="Complement Module, domain 1"/>
    <property type="match status" value="1"/>
</dbReference>
<dbReference type="Gene3D" id="2.60.40.10">
    <property type="entry name" value="Immunoglobulins"/>
    <property type="match status" value="1"/>
</dbReference>
<dbReference type="Gene3D" id="2.10.25.10">
    <property type="entry name" value="Laminin"/>
    <property type="match status" value="2"/>
</dbReference>
<dbReference type="Gene3D" id="3.10.100.10">
    <property type="entry name" value="Mannose-Binding Protein A, subunit A"/>
    <property type="match status" value="3"/>
</dbReference>
<dbReference type="InterPro" id="IPR001304">
    <property type="entry name" value="C-type_lectin-like"/>
</dbReference>
<dbReference type="InterPro" id="IPR016186">
    <property type="entry name" value="C-type_lectin-like/link_sf"/>
</dbReference>
<dbReference type="InterPro" id="IPR018378">
    <property type="entry name" value="C-type_lectin_CS"/>
</dbReference>
<dbReference type="InterPro" id="IPR016187">
    <property type="entry name" value="CTDL_fold"/>
</dbReference>
<dbReference type="InterPro" id="IPR001881">
    <property type="entry name" value="EGF-like_Ca-bd_dom"/>
</dbReference>
<dbReference type="InterPro" id="IPR000742">
    <property type="entry name" value="EGF-like_dom"/>
</dbReference>
<dbReference type="InterPro" id="IPR000152">
    <property type="entry name" value="EGF-type_Asp/Asn_hydroxyl_site"/>
</dbReference>
<dbReference type="InterPro" id="IPR018097">
    <property type="entry name" value="EGF_Ca-bd_CS"/>
</dbReference>
<dbReference type="InterPro" id="IPR050691">
    <property type="entry name" value="Hyaluronan_bind_Proteoglycan"/>
</dbReference>
<dbReference type="InterPro" id="IPR007110">
    <property type="entry name" value="Ig-like_dom"/>
</dbReference>
<dbReference type="InterPro" id="IPR036179">
    <property type="entry name" value="Ig-like_dom_sf"/>
</dbReference>
<dbReference type="InterPro" id="IPR013783">
    <property type="entry name" value="Ig-like_fold"/>
</dbReference>
<dbReference type="InterPro" id="IPR003599">
    <property type="entry name" value="Ig_sub"/>
</dbReference>
<dbReference type="InterPro" id="IPR013106">
    <property type="entry name" value="Ig_V-set"/>
</dbReference>
<dbReference type="InterPro" id="IPR000538">
    <property type="entry name" value="Link_dom"/>
</dbReference>
<dbReference type="InterPro" id="IPR035976">
    <property type="entry name" value="Sushi/SCR/CCP_sf"/>
</dbReference>
<dbReference type="InterPro" id="IPR000436">
    <property type="entry name" value="Sushi_SCR_CCP_dom"/>
</dbReference>
<dbReference type="PANTHER" id="PTHR22804">
    <property type="entry name" value="AGGRECAN/VERSICAN PROTEOGLYCAN"/>
    <property type="match status" value="1"/>
</dbReference>
<dbReference type="PANTHER" id="PTHR22804:SF24">
    <property type="entry name" value="NEUROCAN CORE PROTEIN"/>
    <property type="match status" value="1"/>
</dbReference>
<dbReference type="Pfam" id="PF00008">
    <property type="entry name" value="EGF"/>
    <property type="match status" value="1"/>
</dbReference>
<dbReference type="Pfam" id="PF00059">
    <property type="entry name" value="Lectin_C"/>
    <property type="match status" value="1"/>
</dbReference>
<dbReference type="Pfam" id="PF00084">
    <property type="entry name" value="Sushi"/>
    <property type="match status" value="1"/>
</dbReference>
<dbReference type="Pfam" id="PF07686">
    <property type="entry name" value="V-set"/>
    <property type="match status" value="1"/>
</dbReference>
<dbReference type="Pfam" id="PF00193">
    <property type="entry name" value="Xlink"/>
    <property type="match status" value="2"/>
</dbReference>
<dbReference type="PRINTS" id="PR01265">
    <property type="entry name" value="LINKMODULE"/>
</dbReference>
<dbReference type="SMART" id="SM00032">
    <property type="entry name" value="CCP"/>
    <property type="match status" value="1"/>
</dbReference>
<dbReference type="SMART" id="SM00034">
    <property type="entry name" value="CLECT"/>
    <property type="match status" value="1"/>
</dbReference>
<dbReference type="SMART" id="SM00181">
    <property type="entry name" value="EGF"/>
    <property type="match status" value="2"/>
</dbReference>
<dbReference type="SMART" id="SM00179">
    <property type="entry name" value="EGF_CA"/>
    <property type="match status" value="2"/>
</dbReference>
<dbReference type="SMART" id="SM00409">
    <property type="entry name" value="IG"/>
    <property type="match status" value="1"/>
</dbReference>
<dbReference type="SMART" id="SM00445">
    <property type="entry name" value="LINK"/>
    <property type="match status" value="2"/>
</dbReference>
<dbReference type="SUPFAM" id="SSF56436">
    <property type="entry name" value="C-type lectin-like"/>
    <property type="match status" value="3"/>
</dbReference>
<dbReference type="SUPFAM" id="SSF57535">
    <property type="entry name" value="Complement control module/SCR domain"/>
    <property type="match status" value="1"/>
</dbReference>
<dbReference type="SUPFAM" id="SSF57196">
    <property type="entry name" value="EGF/Laminin"/>
    <property type="match status" value="1"/>
</dbReference>
<dbReference type="SUPFAM" id="SSF48726">
    <property type="entry name" value="Immunoglobulin"/>
    <property type="match status" value="1"/>
</dbReference>
<dbReference type="PROSITE" id="PS00010">
    <property type="entry name" value="ASX_HYDROXYL"/>
    <property type="match status" value="1"/>
</dbReference>
<dbReference type="PROSITE" id="PS00615">
    <property type="entry name" value="C_TYPE_LECTIN_1"/>
    <property type="match status" value="1"/>
</dbReference>
<dbReference type="PROSITE" id="PS50041">
    <property type="entry name" value="C_TYPE_LECTIN_2"/>
    <property type="match status" value="1"/>
</dbReference>
<dbReference type="PROSITE" id="PS00022">
    <property type="entry name" value="EGF_1"/>
    <property type="match status" value="3"/>
</dbReference>
<dbReference type="PROSITE" id="PS01186">
    <property type="entry name" value="EGF_2"/>
    <property type="match status" value="1"/>
</dbReference>
<dbReference type="PROSITE" id="PS50026">
    <property type="entry name" value="EGF_3"/>
    <property type="match status" value="2"/>
</dbReference>
<dbReference type="PROSITE" id="PS01187">
    <property type="entry name" value="EGF_CA"/>
    <property type="match status" value="1"/>
</dbReference>
<dbReference type="PROSITE" id="PS50835">
    <property type="entry name" value="IG_LIKE"/>
    <property type="match status" value="1"/>
</dbReference>
<dbReference type="PROSITE" id="PS01241">
    <property type="entry name" value="LINK_1"/>
    <property type="match status" value="2"/>
</dbReference>
<dbReference type="PROSITE" id="PS50963">
    <property type="entry name" value="LINK_2"/>
    <property type="match status" value="2"/>
</dbReference>
<dbReference type="PROSITE" id="PS50923">
    <property type="entry name" value="SUSHI"/>
    <property type="match status" value="1"/>
</dbReference>
<accession>P55067</accession>
<comment type="function">
    <text>May modulate neuronal adhesion and neurite growth during development by binding to neural cell adhesion molecules (NG-CAM and N-CAM). Chondroitin sulfate proteoglycan; binds to hyaluronic acid.</text>
</comment>
<comment type="subcellular location">
    <subcellularLocation>
        <location>Secreted</location>
    </subcellularLocation>
</comment>
<comment type="tissue specificity">
    <text>Early postnatal and adult brain; not expressed in kidney, lung, liver and muscle.</text>
</comment>
<comment type="PTM">
    <text>Two isoforms were found that probably arise by proteolytic processing. The large isoform is predominant in early postnatal brain, the small isoform is found in adult brain.</text>
</comment>
<comment type="PTM">
    <text evidence="10">O-glycosylated; contains chondroitin sulfate.</text>
</comment>
<comment type="similarity">
    <text evidence="11">Belongs to the aggrecan/versican proteoglycan family.</text>
</comment>
<name>NCAN_RAT</name>
<sequence>MGAESVWASGLLVLWLLLLVSGDQDTQDTTTTEKGLHMLKSGSGPIQAALAELVALPCFFTLQPRQSPLGDIPRIKWTKVQTASGQRQDLPILVAKDNVVRVAKGWQGRVSLPAYPRHRANATLLLGPLRASDSGLYRCQVVKGIEDEQDLVTLEVTGVVFHYRAARDRYALTFAEAQEACHLSSATIAAPRHLQAAFEDGFDNCDAGWLSDRTVRYPITQSRPGCYGDRSSLPGVRSYGRRDPQELYDVYCFARELGGEVFYVGPARRLTLAGARALCQRQGAALASVGQLHLAWHEGLDQCDPGWLADGSVRYPIQTPRRRCGGSAPGVRTVYRFANRTGFPAPGARFDAYCFRAHHHTPQRGDSEIPSSGDEGEIVSAEGPPAPELKPRLGEQEVITPDFQEPLVSSGEDEPLDLTRTQASQETLASTPGGPTLASWLLTGVTSSTGVPSPSSLGVDMEETTPSGTQVAPTPTMRRGRFKGLNGRHFQQQGPEDQLLEAAEASAQPPTLEVTADHMGPSAATEALESDQSHSPWAILTNEVDVPGAGSLGSRSLPESRKWSPSLISPSTVPSTDSTPGLKPGADEAPGVKSAIHHPPWLPSEPAVPSSIPSEALSAVSLQASPGDGSPDFPIVAMLRAPKLWLLPHSTLVPNVSPIPLSPASPLPSSVPEEQAVRPVSFGAEDPETPFQTTMAAPGEASHGSPEADSIEIEGISSMQATKHPISGPWASLDSSNVTVNPVPSDAGILGTESGVLDLPGSPTSDGQATVDMVLATWLPLPGHGLDTGSQSTPMEAHGVTMSVEPTVALEGGATKDPMEATMDVVPSTVDATSGSEPKSSISSTHVVVTAAGDQGTPTLTPTSSEGQVVAQESLGTLTSLPSHPWSSLASSMDEVASVSSGEPTRLWDIPSTLIPVSLGLDESDLKVVAESPGLEGFWEEVASGQEDPTDPCENNPCLHGGTCRTNGTMYGCSCDQGYAGENCEIDIDDCLCSPCENGGTCIDEVNGFICLCLPSYGGNLCEKDTEGCDRGWHKFQGHCYRYFAHRRAWEDAERDCRRRAGHLTSVHSPEEHKFINSFGHENSWIGLNDRTVERDFQWTDNTGLQYENWREKQPDNFFAGGEDCVVMVAHENGRWNDVPCNYNLPYVCKKGTVLCGPPPAVENASLVGVRKVKYNVHATVRYQCDEGFSQHHVATIRCRSNGKWDRPQIVCTKPRRSHRMRRHHHHPHRHHKPRKEHRKHKRHPAEDWEKDEGDFC</sequence>
<reference key="1">
    <citation type="journal article" date="1992" name="J. Biol. Chem.">
        <title>Cloning and primary structure of neurocan, a developmentally regulated, aggregating chondroitin sulfate proteoglycan of brain.</title>
        <authorList>
            <person name="Rauch U."/>
            <person name="Karthikeyan L."/>
            <person name="Maurel P."/>
            <person name="Margolis R.U."/>
            <person name="Margolis R.K."/>
        </authorList>
    </citation>
    <scope>NUCLEOTIDE SEQUENCE [MRNA]</scope>
    <scope>PARTIAL PROTEIN SEQUENCE</scope>
    <source>
        <strain>Sprague-Dawley</strain>
        <tissue>Brain</tissue>
    </source>
</reference>
<reference key="2">
    <citation type="journal article" date="1994" name="J. Cell Biol.">
        <title>The neuronal chondroitin sulfate proteoglycan neurocan binds to the neural cell adhesion molecules Ng-CAM/L1/NILE and N-CAM, and inhibits neuronal adhesion and neurite outgrowth.</title>
        <authorList>
            <person name="Friedlander D.R."/>
            <person name="Milev P."/>
            <person name="Karthikeyan L."/>
            <person name="Margolis R.K."/>
            <person name="Margolis R.U."/>
            <person name="Grumet M."/>
        </authorList>
    </citation>
    <scope>CHARACTERIZATION</scope>
</reference>
<reference key="3">
    <citation type="journal article" date="2013" name="J. Proteome Res.">
        <title>Site-specific glycan-peptide analysis for determination of N-glycoproteome heterogeneity.</title>
        <authorList>
            <person name="Parker B.L."/>
            <person name="Thaysen-Andersen M."/>
            <person name="Solis N."/>
            <person name="Scott N.E."/>
            <person name="Larsen M.R."/>
            <person name="Graham M.E."/>
            <person name="Packer N.H."/>
            <person name="Cordwell S.J."/>
        </authorList>
    </citation>
    <scope>GLYCOSYLATION [LARGE SCALE ANALYSIS] AT ASN-121</scope>
    <scope>IDENTIFICATION BY MASS SPECTROMETRY [LARGE SCALE ANALYSIS]</scope>
    <source>
        <tissue>Brain</tissue>
    </source>
</reference>
<organism>
    <name type="scientific">Rattus norvegicus</name>
    <name type="common">Rat</name>
    <dbReference type="NCBI Taxonomy" id="10116"/>
    <lineage>
        <taxon>Eukaryota</taxon>
        <taxon>Metazoa</taxon>
        <taxon>Chordata</taxon>
        <taxon>Craniata</taxon>
        <taxon>Vertebrata</taxon>
        <taxon>Euteleostomi</taxon>
        <taxon>Mammalia</taxon>
        <taxon>Eutheria</taxon>
        <taxon>Euarchontoglires</taxon>
        <taxon>Glires</taxon>
        <taxon>Rodentia</taxon>
        <taxon>Myomorpha</taxon>
        <taxon>Muroidea</taxon>
        <taxon>Muridae</taxon>
        <taxon>Murinae</taxon>
        <taxon>Rattus</taxon>
    </lineage>
</organism>
<evidence type="ECO:0000250" key="1"/>
<evidence type="ECO:0000250" key="2">
    <source>
        <dbReference type="UniProtKB" id="O14594"/>
    </source>
</evidence>
<evidence type="ECO:0000255" key="3"/>
<evidence type="ECO:0000255" key="4">
    <source>
        <dbReference type="PROSITE-ProRule" id="PRU00040"/>
    </source>
</evidence>
<evidence type="ECO:0000255" key="5">
    <source>
        <dbReference type="PROSITE-ProRule" id="PRU00076"/>
    </source>
</evidence>
<evidence type="ECO:0000255" key="6">
    <source>
        <dbReference type="PROSITE-ProRule" id="PRU00302"/>
    </source>
</evidence>
<evidence type="ECO:0000255" key="7">
    <source>
        <dbReference type="PROSITE-ProRule" id="PRU00323"/>
    </source>
</evidence>
<evidence type="ECO:0000256" key="8">
    <source>
        <dbReference type="SAM" id="MobiDB-lite"/>
    </source>
</evidence>
<evidence type="ECO:0000269" key="9">
    <source>
    </source>
</evidence>
<evidence type="ECO:0000269" key="10">
    <source>
    </source>
</evidence>
<evidence type="ECO:0000305" key="11"/>
<evidence type="ECO:0007744" key="12">
    <source>
    </source>
</evidence>
<gene>
    <name type="primary">Ncan</name>
    <name type="synonym">Cspg3</name>
</gene>
<protein>
    <recommendedName>
        <fullName>Neurocan core protein</fullName>
    </recommendedName>
    <alternativeName>
        <fullName>245 kDa early postnatal core glycoprotein</fullName>
    </alternativeName>
    <alternativeName>
        <fullName>Chondroitin sulfate proteoglycan 3</fullName>
    </alternativeName>
    <component>
        <recommendedName>
            <fullName>150 kDa adult core glycoprotein</fullName>
        </recommendedName>
    </component>
</protein>
<proteinExistence type="evidence at protein level"/>